<comment type="subcellular location">
    <subcellularLocation>
        <location>Secreted</location>
    </subcellularLocation>
</comment>
<comment type="tissue specificity">
    <text>Expressed by the venom duct.</text>
</comment>
<comment type="domain">
    <text evidence="1">The presence of a 'disulfide through disulfide knot' structurally defines this protein as a knottin.</text>
</comment>
<comment type="domain">
    <text>The cysteine framework is VI/VII (C-C-CC-C-C).</text>
</comment>
<comment type="mass spectrometry" mass="3531.1" method="MALDI" evidence="2">
    <text>Monoisotopic mass.</text>
</comment>
<comment type="miscellaneous">
    <text>Authors confirmed the assignment of this toxin to the M superfamily by cDNA sequencing.</text>
</comment>
<accession>P0CH20</accession>
<feature type="peptide" id="PRO_0000397118" description="Conotoxin pr6d">
    <location>
        <begin position="1"/>
        <end position="32"/>
    </location>
</feature>
<feature type="modified residue" description="4-hydroxyproline" evidence="2">
    <location>
        <position position="5"/>
    </location>
</feature>
<feature type="disulfide bond" evidence="1">
    <location>
        <begin position="7"/>
        <end position="20"/>
    </location>
</feature>
<feature type="disulfide bond" evidence="1">
    <location>
        <begin position="14"/>
        <end position="25"/>
    </location>
</feature>
<feature type="disulfide bond" evidence="1">
    <location>
        <begin position="19"/>
        <end position="30"/>
    </location>
</feature>
<dbReference type="GO" id="GO:0005576">
    <property type="term" value="C:extracellular region"/>
    <property type="evidence" value="ECO:0007669"/>
    <property type="project" value="UniProtKB-SubCell"/>
</dbReference>
<dbReference type="GO" id="GO:0090729">
    <property type="term" value="F:toxin activity"/>
    <property type="evidence" value="ECO:0007669"/>
    <property type="project" value="UniProtKB-KW"/>
</dbReference>
<name>O16D_CONPI</name>
<protein>
    <recommendedName>
        <fullName>Conotoxin pr6d</fullName>
    </recommendedName>
</protein>
<evidence type="ECO:0000250" key="1"/>
<evidence type="ECO:0000269" key="2">
    <source>
    </source>
</evidence>
<reference key="1">
    <citation type="journal article" date="2010" name="Peptides">
        <title>Divergent M- and O-superfamily peptides from venom of fish-hunting Conus parius.</title>
        <authorList>
            <person name="Jimenez E.C."/>
            <person name="Olivera B.M."/>
        </authorList>
    </citation>
    <scope>PROTEIN SEQUENCE</scope>
    <scope>NUCLEOTIDE SEQUENCE [MRNA]</scope>
    <scope>HYDROXYLATION AT PRO-5</scope>
    <scope>MASS SPECTROMETRY</scope>
    <source>
        <tissue>Venom</tissue>
        <tissue>Venom duct</tissue>
    </source>
</reference>
<organism>
    <name type="scientific">Conus parius</name>
    <name type="common">Cone snail</name>
    <dbReference type="NCBI Taxonomy" id="505247"/>
    <lineage>
        <taxon>Eukaryota</taxon>
        <taxon>Metazoa</taxon>
        <taxon>Spiralia</taxon>
        <taxon>Lophotrochozoa</taxon>
        <taxon>Mollusca</taxon>
        <taxon>Gastropoda</taxon>
        <taxon>Caenogastropoda</taxon>
        <taxon>Neogastropoda</taxon>
        <taxon>Conoidea</taxon>
        <taxon>Conidae</taxon>
        <taxon>Conus</taxon>
        <taxon>Phasmoconus</taxon>
    </lineage>
</organism>
<sequence length="32" mass="3521">YGNFPTCSETGEDCSAMHCCRSMTCRNNICAD</sequence>
<proteinExistence type="evidence at protein level"/>
<keyword id="KW-0903">Direct protein sequencing</keyword>
<keyword id="KW-1015">Disulfide bond</keyword>
<keyword id="KW-0379">Hydroxylation</keyword>
<keyword id="KW-0960">Knottin</keyword>
<keyword id="KW-0964">Secreted</keyword>
<keyword id="KW-0800">Toxin</keyword>